<organism>
    <name type="scientific">Xenopus laevis</name>
    <name type="common">African clawed frog</name>
    <dbReference type="NCBI Taxonomy" id="8355"/>
    <lineage>
        <taxon>Eukaryota</taxon>
        <taxon>Metazoa</taxon>
        <taxon>Chordata</taxon>
        <taxon>Craniata</taxon>
        <taxon>Vertebrata</taxon>
        <taxon>Euteleostomi</taxon>
        <taxon>Amphibia</taxon>
        <taxon>Batrachia</taxon>
        <taxon>Anura</taxon>
        <taxon>Pipoidea</taxon>
        <taxon>Pipidae</taxon>
        <taxon>Xenopodinae</taxon>
        <taxon>Xenopus</taxon>
        <taxon>Xenopus</taxon>
    </lineage>
</organism>
<keyword id="KW-0963">Cytoplasm</keyword>
<keyword id="KW-0507">mRNA processing</keyword>
<keyword id="KW-0508">mRNA splicing</keyword>
<keyword id="KW-0539">Nucleus</keyword>
<keyword id="KW-1185">Reference proteome</keyword>
<keyword id="KW-0677">Repeat</keyword>
<keyword id="KW-0747">Spliceosome</keyword>
<keyword id="KW-0853">WD repeat</keyword>
<feature type="chain" id="PRO_0000237595" description="WD40 repeat-containing protein SMU1">
    <location>
        <begin position="1"/>
        <end position="513"/>
    </location>
</feature>
<feature type="domain" description="LisH" evidence="7">
    <location>
        <begin position="6"/>
        <end position="38"/>
    </location>
</feature>
<feature type="domain" description="CTLH" evidence="6">
    <location>
        <begin position="40"/>
        <end position="92"/>
    </location>
</feature>
<feature type="repeat" description="WD 1" evidence="5">
    <location>
        <begin position="212"/>
        <end position="253"/>
    </location>
</feature>
<feature type="repeat" description="WD 2" evidence="5">
    <location>
        <begin position="262"/>
        <end position="303"/>
    </location>
</feature>
<feature type="repeat" description="WD 3" evidence="5">
    <location>
        <begin position="305"/>
        <end position="346"/>
    </location>
</feature>
<feature type="repeat" description="WD 4" evidence="5">
    <location>
        <begin position="347"/>
        <end position="386"/>
    </location>
</feature>
<feature type="repeat" description="WD 5" evidence="5">
    <location>
        <begin position="395"/>
        <end position="436"/>
    </location>
</feature>
<feature type="repeat" description="WD 6" evidence="5">
    <location>
        <begin position="440"/>
        <end position="479"/>
    </location>
</feature>
<feature type="repeat" description="WD 7" evidence="5">
    <location>
        <begin position="482"/>
        <end position="513"/>
    </location>
</feature>
<feature type="region of interest" description="Required for interaction with ik" evidence="2">
    <location>
        <begin position="1"/>
        <end position="315"/>
    </location>
</feature>
<dbReference type="EMBL" id="BC070636">
    <property type="protein sequence ID" value="AAH70636.1"/>
    <property type="molecule type" value="mRNA"/>
</dbReference>
<dbReference type="RefSeq" id="NP_001084865.1">
    <property type="nucleotide sequence ID" value="NM_001091396.1"/>
</dbReference>
<dbReference type="SMR" id="Q6NRT3"/>
<dbReference type="BioGRID" id="101280">
    <property type="interactions" value="1"/>
</dbReference>
<dbReference type="IntAct" id="Q6NRT3">
    <property type="interactions" value="3"/>
</dbReference>
<dbReference type="DNASU" id="431914"/>
<dbReference type="GeneID" id="431914"/>
<dbReference type="KEGG" id="xla:431914"/>
<dbReference type="AGR" id="Xenbase:XB-GENE-6251564"/>
<dbReference type="CTD" id="431914"/>
<dbReference type="Xenbase" id="XB-GENE-6251564">
    <property type="gene designation" value="smu1.S"/>
</dbReference>
<dbReference type="OMA" id="VIHLIMQ"/>
<dbReference type="OrthoDB" id="538223at2759"/>
<dbReference type="Proteomes" id="UP000186698">
    <property type="component" value="Chromosome 1S"/>
</dbReference>
<dbReference type="Bgee" id="431914">
    <property type="expression patterns" value="Expressed in egg cell and 19 other cell types or tissues"/>
</dbReference>
<dbReference type="GO" id="GO:0005737">
    <property type="term" value="C:cytoplasm"/>
    <property type="evidence" value="ECO:0007669"/>
    <property type="project" value="UniProtKB-SubCell"/>
</dbReference>
<dbReference type="GO" id="GO:0016607">
    <property type="term" value="C:nuclear speck"/>
    <property type="evidence" value="ECO:0000250"/>
    <property type="project" value="UniProtKB"/>
</dbReference>
<dbReference type="GO" id="GO:0005634">
    <property type="term" value="C:nucleus"/>
    <property type="evidence" value="ECO:0000250"/>
    <property type="project" value="UniProtKB"/>
</dbReference>
<dbReference type="GO" id="GO:0071011">
    <property type="term" value="C:precatalytic spliceosome"/>
    <property type="evidence" value="ECO:0000318"/>
    <property type="project" value="GO_Central"/>
</dbReference>
<dbReference type="GO" id="GO:0071005">
    <property type="term" value="C:U2-type precatalytic spliceosome"/>
    <property type="evidence" value="ECO:0000250"/>
    <property type="project" value="UniProtKB"/>
</dbReference>
<dbReference type="GO" id="GO:0000398">
    <property type="term" value="P:mRNA splicing, via spliceosome"/>
    <property type="evidence" value="ECO:0000250"/>
    <property type="project" value="UniProtKB"/>
</dbReference>
<dbReference type="GO" id="GO:0000381">
    <property type="term" value="P:regulation of alternative mRNA splicing, via spliceosome"/>
    <property type="evidence" value="ECO:0000250"/>
    <property type="project" value="UniProtKB"/>
</dbReference>
<dbReference type="GO" id="GO:0008380">
    <property type="term" value="P:RNA splicing"/>
    <property type="evidence" value="ECO:0000318"/>
    <property type="project" value="GO_Central"/>
</dbReference>
<dbReference type="CDD" id="cd00200">
    <property type="entry name" value="WD40"/>
    <property type="match status" value="1"/>
</dbReference>
<dbReference type="FunFam" id="2.130.10.10:FF:000729">
    <property type="entry name" value="SMU1, DNA replication regulator and spliceosomal factor"/>
    <property type="match status" value="1"/>
</dbReference>
<dbReference type="FunFam" id="2.130.10.10:FF:000754">
    <property type="entry name" value="SMU1, DNA replication regulator and spliceosomal factor"/>
    <property type="match status" value="1"/>
</dbReference>
<dbReference type="FunFam" id="2.130.10.10:FF:000082">
    <property type="entry name" value="WD40 repeat-containing protein SMU1"/>
    <property type="match status" value="1"/>
</dbReference>
<dbReference type="Gene3D" id="2.130.10.10">
    <property type="entry name" value="YVTN repeat-like/Quinoprotein amine dehydrogenase"/>
    <property type="match status" value="2"/>
</dbReference>
<dbReference type="InterPro" id="IPR006595">
    <property type="entry name" value="CTLH_C"/>
</dbReference>
<dbReference type="InterPro" id="IPR020472">
    <property type="entry name" value="G-protein_beta_WD-40_rep"/>
</dbReference>
<dbReference type="InterPro" id="IPR006594">
    <property type="entry name" value="LisH"/>
</dbReference>
<dbReference type="InterPro" id="IPR045184">
    <property type="entry name" value="SMU1"/>
</dbReference>
<dbReference type="InterPro" id="IPR054532">
    <property type="entry name" value="TPL_SMU1_LisH-like"/>
</dbReference>
<dbReference type="InterPro" id="IPR015943">
    <property type="entry name" value="WD40/YVTN_repeat-like_dom_sf"/>
</dbReference>
<dbReference type="InterPro" id="IPR019775">
    <property type="entry name" value="WD40_repeat_CS"/>
</dbReference>
<dbReference type="InterPro" id="IPR036322">
    <property type="entry name" value="WD40_repeat_dom_sf"/>
</dbReference>
<dbReference type="InterPro" id="IPR001680">
    <property type="entry name" value="WD40_rpt"/>
</dbReference>
<dbReference type="PANTHER" id="PTHR22848">
    <property type="entry name" value="WD40 REPEAT PROTEIN"/>
    <property type="match status" value="1"/>
</dbReference>
<dbReference type="Pfam" id="PF17814">
    <property type="entry name" value="LisH_TPL"/>
    <property type="match status" value="1"/>
</dbReference>
<dbReference type="Pfam" id="PF00400">
    <property type="entry name" value="WD40"/>
    <property type="match status" value="5"/>
</dbReference>
<dbReference type="PRINTS" id="PR00320">
    <property type="entry name" value="GPROTEINBRPT"/>
</dbReference>
<dbReference type="SMART" id="SM00668">
    <property type="entry name" value="CTLH"/>
    <property type="match status" value="1"/>
</dbReference>
<dbReference type="SMART" id="SM00667">
    <property type="entry name" value="LisH"/>
    <property type="match status" value="1"/>
</dbReference>
<dbReference type="SMART" id="SM00320">
    <property type="entry name" value="WD40"/>
    <property type="match status" value="7"/>
</dbReference>
<dbReference type="SUPFAM" id="SSF50978">
    <property type="entry name" value="WD40 repeat-like"/>
    <property type="match status" value="1"/>
</dbReference>
<dbReference type="PROSITE" id="PS50897">
    <property type="entry name" value="CTLH"/>
    <property type="match status" value="1"/>
</dbReference>
<dbReference type="PROSITE" id="PS50896">
    <property type="entry name" value="LISH"/>
    <property type="match status" value="1"/>
</dbReference>
<dbReference type="PROSITE" id="PS00678">
    <property type="entry name" value="WD_REPEATS_1"/>
    <property type="match status" value="2"/>
</dbReference>
<dbReference type="PROSITE" id="PS50082">
    <property type="entry name" value="WD_REPEATS_2"/>
    <property type="match status" value="5"/>
</dbReference>
<dbReference type="PROSITE" id="PS50294">
    <property type="entry name" value="WD_REPEATS_REGION"/>
    <property type="match status" value="1"/>
</dbReference>
<comment type="function">
    <text evidence="2 3">Involved in pre-mRNA splicing as a component of the spliceosome (By similarity). Required for normal accumulation of ik (By similarity). Required for normal mitotic spindle assembly and normal progress through mitosis (By similarity).</text>
</comment>
<comment type="subunit">
    <text evidence="2">Component of the spliceosome B complex. Interacts with ik.</text>
</comment>
<comment type="subcellular location">
    <subcellularLocation>
        <location evidence="4">Cytoplasm</location>
    </subcellularLocation>
    <subcellularLocation>
        <location evidence="3">Nucleus</location>
    </subcellularLocation>
    <subcellularLocation>
        <location evidence="3">Nucleus speckle</location>
    </subcellularLocation>
    <text evidence="3">Colocalizes with srsf1 in nuclear speckles.</text>
</comment>
<comment type="domain">
    <text evidence="1">The WD repeats assemble into a seven-bladed WD propeller.</text>
</comment>
<comment type="similarity">
    <text evidence="8">Belongs to the WD repeat SMU1 family.</text>
</comment>
<reference key="1">
    <citation type="submission" date="2004-05" db="EMBL/GenBank/DDBJ databases">
        <authorList>
            <consortium name="NIH - Xenopus Gene Collection (XGC) project"/>
        </authorList>
    </citation>
    <scope>NUCLEOTIDE SEQUENCE [LARGE SCALE MRNA]</scope>
    <source>
        <tissue>Embryo</tissue>
    </source>
</reference>
<proteinExistence type="evidence at transcript level"/>
<name>SMU1_XENLA</name>
<sequence length="513" mass="57623">MSIEIESSDVIRLIMQYLKENSLHRTLATLQEETTVSLNTVDSIESFVADINSGHWDTVLQAIQSLKLPDKTLIDLYEQVVLELIELRELGAARSLLRQTDPMIMLKQNQSERYIHLENLLARSYFDPREAYPDGSSKEKRRTAIAQALAGEVSVVPPSRLMALLGQALKWQQHQGLLPPGMTIDLFRGKAAVKDVEEEKFPTQLSRHIKFGQKSHVECARFSPDGQYLVTGSVDGFIEVWNFTTGKIRKDLKYQAQDNFMMMDDAVLCMCFSRDTEMLATGAQDGKIKVWKIQSGQCLRRFERAHSKGVTCLSFSKDSSQILSASFDQTIRIHGLKSGKTLKEFRGHSSFVNEATFTQDGHYIISASSDGTVKIWNMKTTECSNTFKSLGSTAGTDITVNSVILLPKNPEHFVVCNRSNTVVIMNMQGQIVRSFSSGKREGGDFVCCTLSPRGEWIYCVGEDFVLYCFSTVTGKLERTLTVHEKDVIGIAHHPHQNLIGTYSEDGLLKLWKP</sequence>
<gene>
    <name type="primary">smu1</name>
</gene>
<accession>Q6NRT3</accession>
<evidence type="ECO:0000250" key="1">
    <source>
        <dbReference type="UniProtKB" id="G5EEG7"/>
    </source>
</evidence>
<evidence type="ECO:0000250" key="2">
    <source>
        <dbReference type="UniProtKB" id="Q2TAY7"/>
    </source>
</evidence>
<evidence type="ECO:0000250" key="3">
    <source>
        <dbReference type="UniProtKB" id="Q76B40"/>
    </source>
</evidence>
<evidence type="ECO:0000250" key="4">
    <source>
        <dbReference type="UniProtKB" id="Q99M63"/>
    </source>
</evidence>
<evidence type="ECO:0000255" key="5"/>
<evidence type="ECO:0000255" key="6">
    <source>
        <dbReference type="PROSITE-ProRule" id="PRU00058"/>
    </source>
</evidence>
<evidence type="ECO:0000255" key="7">
    <source>
        <dbReference type="PROSITE-ProRule" id="PRU00126"/>
    </source>
</evidence>
<evidence type="ECO:0000305" key="8"/>
<protein>
    <recommendedName>
        <fullName>WD40 repeat-containing protein SMU1</fullName>
    </recommendedName>
    <alternativeName>
        <fullName>Smu-1 suppressor of mec-8 and unc-52 protein homolog</fullName>
    </alternativeName>
</protein>